<protein>
    <recommendedName>
        <fullName evidence="5">Pectinesterase inhibitor 12</fullName>
    </recommendedName>
    <alternativeName>
        <fullName evidence="4">Pectin methylesterase inhibitor 12</fullName>
        <shortName evidence="4">OsPMEI12</shortName>
    </alternativeName>
</protein>
<dbReference type="EMBL" id="DP000009">
    <property type="protein sequence ID" value="ABF93462.1"/>
    <property type="molecule type" value="Genomic_DNA"/>
</dbReference>
<dbReference type="EMBL" id="AP008209">
    <property type="protein sequence ID" value="BAH91953.1"/>
    <property type="molecule type" value="Genomic_DNA"/>
</dbReference>
<dbReference type="EMBL" id="AP014959">
    <property type="protein sequence ID" value="BAS81805.1"/>
    <property type="molecule type" value="Genomic_DNA"/>
</dbReference>
<dbReference type="EMBL" id="CM000140">
    <property type="protein sequence ID" value="EAZ25242.1"/>
    <property type="molecule type" value="Genomic_DNA"/>
</dbReference>
<dbReference type="EMBL" id="AK107110">
    <property type="protein sequence ID" value="BAG97952.1"/>
    <property type="molecule type" value="mRNA"/>
</dbReference>
<dbReference type="EMBL" id="AK120771">
    <property type="protein sequence ID" value="BAH00165.1"/>
    <property type="molecule type" value="mRNA"/>
</dbReference>
<dbReference type="RefSeq" id="XP_015628425.1">
    <property type="nucleotide sequence ID" value="XM_015772939.1"/>
</dbReference>
<dbReference type="SMR" id="Q10T67"/>
<dbReference type="FunCoup" id="Q10T67">
    <property type="interactions" value="6"/>
</dbReference>
<dbReference type="STRING" id="39947.Q10T67"/>
<dbReference type="PaxDb" id="39947-Q10T67"/>
<dbReference type="EnsemblPlants" id="Os03t0100100-01">
    <property type="protein sequence ID" value="Os03t0100100-01"/>
    <property type="gene ID" value="Os03g0100100"/>
</dbReference>
<dbReference type="Gramene" id="Os03t0100100-01">
    <property type="protein sequence ID" value="Os03t0100100-01"/>
    <property type="gene ID" value="Os03g0100100"/>
</dbReference>
<dbReference type="KEGG" id="dosa:Os03g0100150"/>
<dbReference type="KEGG" id="osa:9271595"/>
<dbReference type="eggNOG" id="ENOG502R86Y">
    <property type="taxonomic scope" value="Eukaryota"/>
</dbReference>
<dbReference type="HOGENOM" id="CLU_033761_2_1_1"/>
<dbReference type="InParanoid" id="Q10T67"/>
<dbReference type="OMA" id="GAHDQIN"/>
<dbReference type="Proteomes" id="UP000000763">
    <property type="component" value="Chromosome 3"/>
</dbReference>
<dbReference type="Proteomes" id="UP000007752">
    <property type="component" value="Chromosome 3"/>
</dbReference>
<dbReference type="Proteomes" id="UP000059680">
    <property type="component" value="Chromosome 3"/>
</dbReference>
<dbReference type="GO" id="GO:0048046">
    <property type="term" value="C:apoplast"/>
    <property type="evidence" value="ECO:0000314"/>
    <property type="project" value="UniProtKB"/>
</dbReference>
<dbReference type="GO" id="GO:0005886">
    <property type="term" value="C:plasma membrane"/>
    <property type="evidence" value="ECO:0000314"/>
    <property type="project" value="CACAO"/>
</dbReference>
<dbReference type="GO" id="GO:0046910">
    <property type="term" value="F:pectinesterase inhibitor activity"/>
    <property type="evidence" value="ECO:0000314"/>
    <property type="project" value="UniProtKB"/>
</dbReference>
<dbReference type="Gene3D" id="1.20.140.40">
    <property type="entry name" value="Invertase/pectin methylesterase inhibitor family protein"/>
    <property type="match status" value="1"/>
</dbReference>
<dbReference type="InterPro" id="IPR035513">
    <property type="entry name" value="Invertase/methylesterase_inhib"/>
</dbReference>
<dbReference type="InterPro" id="IPR006501">
    <property type="entry name" value="Pectinesterase_inhib_dom"/>
</dbReference>
<dbReference type="NCBIfam" id="TIGR01614">
    <property type="entry name" value="PME_inhib"/>
    <property type="match status" value="1"/>
</dbReference>
<dbReference type="PANTHER" id="PTHR35357">
    <property type="entry name" value="OS02G0537100 PROTEIN"/>
    <property type="match status" value="1"/>
</dbReference>
<dbReference type="PANTHER" id="PTHR35357:SF7">
    <property type="entry name" value="PECTINESTERASE INHIBITOR 12"/>
    <property type="match status" value="1"/>
</dbReference>
<dbReference type="SUPFAM" id="SSF101148">
    <property type="entry name" value="Plant invertase/pectin methylesterase inhibitor"/>
    <property type="match status" value="1"/>
</dbReference>
<reference key="1">
    <citation type="journal article" date="2005" name="Genome Res.">
        <title>Sequence, annotation, and analysis of synteny between rice chromosome 3 and diverged grass species.</title>
        <authorList>
            <consortium name="The rice chromosome 3 sequencing consortium"/>
            <person name="Buell C.R."/>
            <person name="Yuan Q."/>
            <person name="Ouyang S."/>
            <person name="Liu J."/>
            <person name="Zhu W."/>
            <person name="Wang A."/>
            <person name="Maiti R."/>
            <person name="Haas B."/>
            <person name="Wortman J."/>
            <person name="Pertea M."/>
            <person name="Jones K.M."/>
            <person name="Kim M."/>
            <person name="Overton L."/>
            <person name="Tsitrin T."/>
            <person name="Fadrosh D."/>
            <person name="Bera J."/>
            <person name="Weaver B."/>
            <person name="Jin S."/>
            <person name="Johri S."/>
            <person name="Reardon M."/>
            <person name="Webb K."/>
            <person name="Hill J."/>
            <person name="Moffat K."/>
            <person name="Tallon L."/>
            <person name="Van Aken S."/>
            <person name="Lewis M."/>
            <person name="Utterback T."/>
            <person name="Feldblyum T."/>
            <person name="Zismann V."/>
            <person name="Iobst S."/>
            <person name="Hsiao J."/>
            <person name="de Vazeille A.R."/>
            <person name="Salzberg S.L."/>
            <person name="White O."/>
            <person name="Fraser C.M."/>
            <person name="Yu Y."/>
            <person name="Kim H."/>
            <person name="Rambo T."/>
            <person name="Currie J."/>
            <person name="Collura K."/>
            <person name="Kernodle-Thompson S."/>
            <person name="Wei F."/>
            <person name="Kudrna K."/>
            <person name="Ammiraju J.S.S."/>
            <person name="Luo M."/>
            <person name="Goicoechea J.L."/>
            <person name="Wing R.A."/>
            <person name="Henry D."/>
            <person name="Oates R."/>
            <person name="Palmer M."/>
            <person name="Pries G."/>
            <person name="Saski C."/>
            <person name="Simmons J."/>
            <person name="Soderlund C."/>
            <person name="Nelson W."/>
            <person name="de la Bastide M."/>
            <person name="Spiegel L."/>
            <person name="Nascimento L."/>
            <person name="Huang E."/>
            <person name="Preston R."/>
            <person name="Zutavern T."/>
            <person name="Palmer L."/>
            <person name="O'Shaughnessy A."/>
            <person name="Dike S."/>
            <person name="McCombie W.R."/>
            <person name="Minx P."/>
            <person name="Cordum H."/>
            <person name="Wilson R."/>
            <person name="Jin W."/>
            <person name="Lee H.R."/>
            <person name="Jiang J."/>
            <person name="Jackson S."/>
        </authorList>
    </citation>
    <scope>NUCLEOTIDE SEQUENCE [LARGE SCALE GENOMIC DNA]</scope>
    <source>
        <strain>cv. Nipponbare</strain>
    </source>
</reference>
<reference key="2">
    <citation type="journal article" date="2005" name="Nature">
        <title>The map-based sequence of the rice genome.</title>
        <authorList>
            <consortium name="International rice genome sequencing project (IRGSP)"/>
        </authorList>
    </citation>
    <scope>NUCLEOTIDE SEQUENCE [LARGE SCALE GENOMIC DNA]</scope>
    <source>
        <strain>cv. Nipponbare</strain>
    </source>
</reference>
<reference key="3">
    <citation type="journal article" date="2008" name="Nucleic Acids Res.">
        <title>The rice annotation project database (RAP-DB): 2008 update.</title>
        <authorList>
            <consortium name="The rice annotation project (RAP)"/>
        </authorList>
    </citation>
    <scope>GENOME REANNOTATION</scope>
    <source>
        <strain>cv. Nipponbare</strain>
    </source>
</reference>
<reference key="4">
    <citation type="journal article" date="2013" name="Rice">
        <title>Improvement of the Oryza sativa Nipponbare reference genome using next generation sequence and optical map data.</title>
        <authorList>
            <person name="Kawahara Y."/>
            <person name="de la Bastide M."/>
            <person name="Hamilton J.P."/>
            <person name="Kanamori H."/>
            <person name="McCombie W.R."/>
            <person name="Ouyang S."/>
            <person name="Schwartz D.C."/>
            <person name="Tanaka T."/>
            <person name="Wu J."/>
            <person name="Zhou S."/>
            <person name="Childs K.L."/>
            <person name="Davidson R.M."/>
            <person name="Lin H."/>
            <person name="Quesada-Ocampo L."/>
            <person name="Vaillancourt B."/>
            <person name="Sakai H."/>
            <person name="Lee S.S."/>
            <person name="Kim J."/>
            <person name="Numa H."/>
            <person name="Itoh T."/>
            <person name="Buell C.R."/>
            <person name="Matsumoto T."/>
        </authorList>
    </citation>
    <scope>GENOME REANNOTATION</scope>
    <source>
        <strain>cv. Nipponbare</strain>
    </source>
</reference>
<reference key="5">
    <citation type="journal article" date="2005" name="PLoS Biol.">
        <title>The genomes of Oryza sativa: a history of duplications.</title>
        <authorList>
            <person name="Yu J."/>
            <person name="Wang J."/>
            <person name="Lin W."/>
            <person name="Li S."/>
            <person name="Li H."/>
            <person name="Zhou J."/>
            <person name="Ni P."/>
            <person name="Dong W."/>
            <person name="Hu S."/>
            <person name="Zeng C."/>
            <person name="Zhang J."/>
            <person name="Zhang Y."/>
            <person name="Li R."/>
            <person name="Xu Z."/>
            <person name="Li S."/>
            <person name="Li X."/>
            <person name="Zheng H."/>
            <person name="Cong L."/>
            <person name="Lin L."/>
            <person name="Yin J."/>
            <person name="Geng J."/>
            <person name="Li G."/>
            <person name="Shi J."/>
            <person name="Liu J."/>
            <person name="Lv H."/>
            <person name="Li J."/>
            <person name="Wang J."/>
            <person name="Deng Y."/>
            <person name="Ran L."/>
            <person name="Shi X."/>
            <person name="Wang X."/>
            <person name="Wu Q."/>
            <person name="Li C."/>
            <person name="Ren X."/>
            <person name="Wang J."/>
            <person name="Wang X."/>
            <person name="Li D."/>
            <person name="Liu D."/>
            <person name="Zhang X."/>
            <person name="Ji Z."/>
            <person name="Zhao W."/>
            <person name="Sun Y."/>
            <person name="Zhang Z."/>
            <person name="Bao J."/>
            <person name="Han Y."/>
            <person name="Dong L."/>
            <person name="Ji J."/>
            <person name="Chen P."/>
            <person name="Wu S."/>
            <person name="Liu J."/>
            <person name="Xiao Y."/>
            <person name="Bu D."/>
            <person name="Tan J."/>
            <person name="Yang L."/>
            <person name="Ye C."/>
            <person name="Zhang J."/>
            <person name="Xu J."/>
            <person name="Zhou Y."/>
            <person name="Yu Y."/>
            <person name="Zhang B."/>
            <person name="Zhuang S."/>
            <person name="Wei H."/>
            <person name="Liu B."/>
            <person name="Lei M."/>
            <person name="Yu H."/>
            <person name="Li Y."/>
            <person name="Xu H."/>
            <person name="Wei S."/>
            <person name="He X."/>
            <person name="Fang L."/>
            <person name="Zhang Z."/>
            <person name="Zhang Y."/>
            <person name="Huang X."/>
            <person name="Su Z."/>
            <person name="Tong W."/>
            <person name="Li J."/>
            <person name="Tong Z."/>
            <person name="Li S."/>
            <person name="Ye J."/>
            <person name="Wang L."/>
            <person name="Fang L."/>
            <person name="Lei T."/>
            <person name="Chen C.-S."/>
            <person name="Chen H.-C."/>
            <person name="Xu Z."/>
            <person name="Li H."/>
            <person name="Huang H."/>
            <person name="Zhang F."/>
            <person name="Xu H."/>
            <person name="Li N."/>
            <person name="Zhao C."/>
            <person name="Li S."/>
            <person name="Dong L."/>
            <person name="Huang Y."/>
            <person name="Li L."/>
            <person name="Xi Y."/>
            <person name="Qi Q."/>
            <person name="Li W."/>
            <person name="Zhang B."/>
            <person name="Hu W."/>
            <person name="Zhang Y."/>
            <person name="Tian X."/>
            <person name="Jiao Y."/>
            <person name="Liang X."/>
            <person name="Jin J."/>
            <person name="Gao L."/>
            <person name="Zheng W."/>
            <person name="Hao B."/>
            <person name="Liu S.-M."/>
            <person name="Wang W."/>
            <person name="Yuan L."/>
            <person name="Cao M."/>
            <person name="McDermott J."/>
            <person name="Samudrala R."/>
            <person name="Wang J."/>
            <person name="Wong G.K.-S."/>
            <person name="Yang H."/>
        </authorList>
    </citation>
    <scope>NUCLEOTIDE SEQUENCE [LARGE SCALE GENOMIC DNA]</scope>
    <source>
        <strain>cv. Nipponbare</strain>
    </source>
</reference>
<reference key="6">
    <citation type="journal article" date="2003" name="Science">
        <title>Collection, mapping, and annotation of over 28,000 cDNA clones from japonica rice.</title>
        <authorList>
            <consortium name="The rice full-length cDNA consortium"/>
        </authorList>
    </citation>
    <scope>NUCLEOTIDE SEQUENCE [LARGE SCALE MRNA]</scope>
    <source>
        <strain>cv. Nipponbare</strain>
    </source>
</reference>
<reference key="7">
    <citation type="journal article" date="2016" name="Plant Physiol. Biochem.">
        <title>Molecular and biochemical characterization of rice pectin methylesterase inhibitors (OsPMEIs).</title>
        <authorList>
            <person name="Nguyen H.P."/>
            <person name="Jeong H.Y."/>
            <person name="Kim H."/>
            <person name="Kim Y.C."/>
            <person name="Lee C."/>
        </authorList>
    </citation>
    <scope>FUNCTION</scope>
    <scope>SUBCELLULAR LOCATION</scope>
    <scope>INDUCTION</scope>
    <scope>GENE FAMILY</scope>
    <scope>NOMENCLATURE</scope>
</reference>
<name>PMI12_ORYSJ</name>
<organism>
    <name type="scientific">Oryza sativa subsp. japonica</name>
    <name type="common">Rice</name>
    <dbReference type="NCBI Taxonomy" id="39947"/>
    <lineage>
        <taxon>Eukaryota</taxon>
        <taxon>Viridiplantae</taxon>
        <taxon>Streptophyta</taxon>
        <taxon>Embryophyta</taxon>
        <taxon>Tracheophyta</taxon>
        <taxon>Spermatophyta</taxon>
        <taxon>Magnoliopsida</taxon>
        <taxon>Liliopsida</taxon>
        <taxon>Poales</taxon>
        <taxon>Poaceae</taxon>
        <taxon>BOP clade</taxon>
        <taxon>Oryzoideae</taxon>
        <taxon>Oryzeae</taxon>
        <taxon>Oryzinae</taxon>
        <taxon>Oryza</taxon>
        <taxon>Oryza sativa</taxon>
    </lineage>
</organism>
<feature type="signal peptide" evidence="2">
    <location>
        <begin position="1"/>
        <end position="26"/>
    </location>
</feature>
<feature type="chain" id="PRO_5009341851" description="Pectinesterase inhibitor 12" evidence="2">
    <location>
        <begin position="27"/>
        <end position="203"/>
    </location>
</feature>
<feature type="disulfide bond" evidence="1">
    <location>
        <begin position="32"/>
        <end position="47"/>
    </location>
</feature>
<feature type="disulfide bond" evidence="1">
    <location>
        <begin position="100"/>
        <end position="140"/>
    </location>
</feature>
<keyword id="KW-0052">Apoplast</keyword>
<keyword id="KW-1015">Disulfide bond</keyword>
<keyword id="KW-1185">Reference proteome</keyword>
<keyword id="KW-0964">Secreted</keyword>
<keyword id="KW-0732">Signal</keyword>
<sequence length="203" mass="20739">MRMSKALAAVVAISVSLSAAAMGVDATVESTCSDAAASDKRVHLAMCLSQLGHHRDADAWGLAKAATLVGVDKADLAADDIKELEAGASTAGIKPALAECAKQYRGVGFAFASAHDVINNRAYDVGEKKLDEALSLTQKCNAAFAKIGVPLQQPLAQLTADTIQIAIIAKAITCLVNVNNNPALVAAAAAAAAAKAPQQSQYP</sequence>
<comment type="function">
    <text evidence="3">Pectin methylesterase (PME) inhibitor that inhibits PME in vitro.</text>
</comment>
<comment type="subcellular location">
    <subcellularLocation>
        <location evidence="3">Secreted</location>
        <location evidence="3">Extracellular space</location>
        <location evidence="3">Apoplast</location>
    </subcellularLocation>
</comment>
<comment type="induction">
    <text evidence="3">Induced by drought stress.</text>
</comment>
<comment type="similarity">
    <text evidence="5">Belongs to the PMEI family.</text>
</comment>
<accession>Q10T67</accession>
<evidence type="ECO:0000250" key="1">
    <source>
        <dbReference type="UniProtKB" id="Q9LNF2"/>
    </source>
</evidence>
<evidence type="ECO:0000255" key="2"/>
<evidence type="ECO:0000269" key="3">
    <source>
    </source>
</evidence>
<evidence type="ECO:0000303" key="4">
    <source>
    </source>
</evidence>
<evidence type="ECO:0000305" key="5"/>
<evidence type="ECO:0000312" key="6">
    <source>
        <dbReference type="EMBL" id="ABF93462.1"/>
    </source>
</evidence>
<evidence type="ECO:0000312" key="7">
    <source>
        <dbReference type="EMBL" id="BAH91953.1"/>
    </source>
</evidence>
<evidence type="ECO:0000312" key="8">
    <source>
        <dbReference type="EMBL" id="EAZ25242.1"/>
    </source>
</evidence>
<gene>
    <name evidence="4" type="primary">PMEI12</name>
    <name evidence="7" type="ordered locus">Os03g0100100</name>
    <name evidence="6" type="ordered locus">LOC_Os03g01020</name>
    <name evidence="8" type="ORF">OsJ_09046</name>
</gene>
<proteinExistence type="evidence at transcript level"/>